<evidence type="ECO:0000255" key="1">
    <source>
        <dbReference type="HAMAP-Rule" id="MF_00368"/>
    </source>
</evidence>
<evidence type="ECO:0000305" key="2"/>
<proteinExistence type="inferred from homology"/>
<gene>
    <name evidence="1" type="primary">rplL</name>
    <name type="ordered locus">ckrop_1859</name>
</gene>
<reference key="1">
    <citation type="journal article" date="2008" name="J. Biotechnol.">
        <title>Ultrafast pyrosequencing of Corynebacterium kroppenstedtii DSM44385 revealed insights into the physiology of a lipophilic corynebacterium that lacks mycolic acids.</title>
        <authorList>
            <person name="Tauch A."/>
            <person name="Schneider J."/>
            <person name="Szczepanowski R."/>
            <person name="Tilker A."/>
            <person name="Viehoever P."/>
            <person name="Gartemann K.-H."/>
            <person name="Arnold W."/>
            <person name="Blom J."/>
            <person name="Brinkrolf K."/>
            <person name="Brune I."/>
            <person name="Goetker S."/>
            <person name="Weisshaar B."/>
            <person name="Goesmann A."/>
            <person name="Droege M."/>
            <person name="Puehler A."/>
        </authorList>
    </citation>
    <scope>NUCLEOTIDE SEQUENCE [LARGE SCALE GENOMIC DNA]</scope>
    <source>
        <strain>DSM 44385 / JCM 11950 / CIP 105744 / CCUG 35717</strain>
    </source>
</reference>
<organism>
    <name type="scientific">Corynebacterium kroppenstedtii (strain DSM 44385 / JCM 11950 / CIP 105744 / CCUG 35717)</name>
    <dbReference type="NCBI Taxonomy" id="645127"/>
    <lineage>
        <taxon>Bacteria</taxon>
        <taxon>Bacillati</taxon>
        <taxon>Actinomycetota</taxon>
        <taxon>Actinomycetes</taxon>
        <taxon>Mycobacteriales</taxon>
        <taxon>Corynebacteriaceae</taxon>
        <taxon>Corynebacterium</taxon>
    </lineage>
</organism>
<sequence length="128" mass="13429">MAKYTNEELIEAFKEMTLVELTEFKNLFEETFDVTAAAPVAVAAAGAAGGEAAAEEEKDEFDVVLEDAGAKKIGVIKVVREVVSGLGLKEAKDLVESAPKAILEGASKDDAEAAKTKLEEAGAKVSLK</sequence>
<keyword id="KW-1185">Reference proteome</keyword>
<keyword id="KW-0687">Ribonucleoprotein</keyword>
<keyword id="KW-0689">Ribosomal protein</keyword>
<protein>
    <recommendedName>
        <fullName evidence="1">Large ribosomal subunit protein bL12</fullName>
    </recommendedName>
    <alternativeName>
        <fullName evidence="2">50S ribosomal protein L7/L12</fullName>
    </alternativeName>
</protein>
<feature type="chain" id="PRO_1000205552" description="Large ribosomal subunit protein bL12">
    <location>
        <begin position="1"/>
        <end position="128"/>
    </location>
</feature>
<dbReference type="EMBL" id="CP001620">
    <property type="protein sequence ID" value="ACR18577.1"/>
    <property type="molecule type" value="Genomic_DNA"/>
</dbReference>
<dbReference type="RefSeq" id="WP_012732464.1">
    <property type="nucleotide sequence ID" value="NC_012704.1"/>
</dbReference>
<dbReference type="SMR" id="C4LL72"/>
<dbReference type="STRING" id="645127.ckrop_1859"/>
<dbReference type="GeneID" id="92726655"/>
<dbReference type="KEGG" id="ckp:ckrop_1859"/>
<dbReference type="eggNOG" id="COG0222">
    <property type="taxonomic scope" value="Bacteria"/>
</dbReference>
<dbReference type="HOGENOM" id="CLU_086499_3_0_11"/>
<dbReference type="OrthoDB" id="9811748at2"/>
<dbReference type="Proteomes" id="UP000001473">
    <property type="component" value="Chromosome"/>
</dbReference>
<dbReference type="GO" id="GO:0022625">
    <property type="term" value="C:cytosolic large ribosomal subunit"/>
    <property type="evidence" value="ECO:0007669"/>
    <property type="project" value="TreeGrafter"/>
</dbReference>
<dbReference type="GO" id="GO:0003729">
    <property type="term" value="F:mRNA binding"/>
    <property type="evidence" value="ECO:0007669"/>
    <property type="project" value="TreeGrafter"/>
</dbReference>
<dbReference type="GO" id="GO:0003735">
    <property type="term" value="F:structural constituent of ribosome"/>
    <property type="evidence" value="ECO:0007669"/>
    <property type="project" value="InterPro"/>
</dbReference>
<dbReference type="GO" id="GO:0006412">
    <property type="term" value="P:translation"/>
    <property type="evidence" value="ECO:0007669"/>
    <property type="project" value="UniProtKB-UniRule"/>
</dbReference>
<dbReference type="CDD" id="cd00387">
    <property type="entry name" value="Ribosomal_L7_L12"/>
    <property type="match status" value="1"/>
</dbReference>
<dbReference type="FunFam" id="3.30.1390.10:FF:000001">
    <property type="entry name" value="50S ribosomal protein L7/L12"/>
    <property type="match status" value="1"/>
</dbReference>
<dbReference type="Gene3D" id="3.30.1390.10">
    <property type="match status" value="1"/>
</dbReference>
<dbReference type="Gene3D" id="1.20.5.710">
    <property type="entry name" value="Single helix bin"/>
    <property type="match status" value="1"/>
</dbReference>
<dbReference type="HAMAP" id="MF_00368">
    <property type="entry name" value="Ribosomal_bL12"/>
    <property type="match status" value="1"/>
</dbReference>
<dbReference type="InterPro" id="IPR000206">
    <property type="entry name" value="Ribosomal_bL12"/>
</dbReference>
<dbReference type="InterPro" id="IPR013823">
    <property type="entry name" value="Ribosomal_bL12_C"/>
</dbReference>
<dbReference type="InterPro" id="IPR014719">
    <property type="entry name" value="Ribosomal_bL12_C/ClpS-like"/>
</dbReference>
<dbReference type="InterPro" id="IPR008932">
    <property type="entry name" value="Ribosomal_bL12_oligo"/>
</dbReference>
<dbReference type="InterPro" id="IPR036235">
    <property type="entry name" value="Ribosomal_bL12_oligo_N_sf"/>
</dbReference>
<dbReference type="NCBIfam" id="TIGR00855">
    <property type="entry name" value="L12"/>
    <property type="match status" value="1"/>
</dbReference>
<dbReference type="PANTHER" id="PTHR45987">
    <property type="entry name" value="39S RIBOSOMAL PROTEIN L12"/>
    <property type="match status" value="1"/>
</dbReference>
<dbReference type="PANTHER" id="PTHR45987:SF4">
    <property type="entry name" value="LARGE RIBOSOMAL SUBUNIT PROTEIN BL12M"/>
    <property type="match status" value="1"/>
</dbReference>
<dbReference type="Pfam" id="PF00542">
    <property type="entry name" value="Ribosomal_L12"/>
    <property type="match status" value="1"/>
</dbReference>
<dbReference type="Pfam" id="PF16320">
    <property type="entry name" value="Ribosomal_L12_N"/>
    <property type="match status" value="1"/>
</dbReference>
<dbReference type="SUPFAM" id="SSF54736">
    <property type="entry name" value="ClpS-like"/>
    <property type="match status" value="1"/>
</dbReference>
<dbReference type="SUPFAM" id="SSF48300">
    <property type="entry name" value="Ribosomal protein L7/12, oligomerisation (N-terminal) domain"/>
    <property type="match status" value="1"/>
</dbReference>
<name>RL7_CORK4</name>
<accession>C4LL72</accession>
<comment type="function">
    <text evidence="1">Forms part of the ribosomal stalk which helps the ribosome interact with GTP-bound translation factors. Is thus essential for accurate translation.</text>
</comment>
<comment type="subunit">
    <text evidence="1">Homodimer. Part of the ribosomal stalk of the 50S ribosomal subunit. Forms a multimeric L10(L12)X complex, where L10 forms an elongated spine to which 2 to 4 L12 dimers bind in a sequential fashion. Binds GTP-bound translation factors.</text>
</comment>
<comment type="similarity">
    <text evidence="1">Belongs to the bacterial ribosomal protein bL12 family.</text>
</comment>